<comment type="function">
    <text evidence="1">Mnh complex is a Na(+)/H(+) antiporter involved in Na(+) excretion.</text>
</comment>
<comment type="subunit">
    <text evidence="1">May form a heterooligomeric complex that consists of seven subunits: mnhA1, mnhB1, mnhC1, mnhD1, mnhE1, mnhF1 and mnhG1.</text>
</comment>
<comment type="subcellular location">
    <subcellularLocation>
        <location evidence="3">Cell membrane</location>
        <topology evidence="3">Multi-pass membrane protein</topology>
    </subcellularLocation>
</comment>
<comment type="similarity">
    <text evidence="3">Belongs to the CPA3 antiporters (TC 2.A.63) subunit A family.</text>
</comment>
<name>MNHA1_STAA9</name>
<evidence type="ECO:0000250" key="1"/>
<evidence type="ECO:0000255" key="2"/>
<evidence type="ECO:0000305" key="3"/>
<protein>
    <recommendedName>
        <fullName>Na(+)/H(+) antiporter subunit A1</fullName>
    </recommendedName>
    <alternativeName>
        <fullName>Mnh complex subunit A1</fullName>
    </alternativeName>
</protein>
<sequence>MSLLHIAVILPLIFALIIPILYRFFKRIHLGWFVLPVPIVIFIYMLTLIKTTMSGNTVMKTLNWMPHFGMNFDLYLDGLGLLFSLLISGIGSLVVLYSIGYLSKSEQLGNFYCYLLLFMGAMLGVVLSDNVIILYLFWELTSFSSFLLISFWRERQASIYGAQKSLIITVFGGLSLLGGIILLAIPTQSFSIQYMIQHASEIQNSPFFIFAMILIMIGAFTKSAQFPFYIWLPDAMEAPTPVSAYLHSATMVKAGLYLIARMTPIFAASQGWVWTVTLVGLITLFWASLNATKQQDLKGILAFSTVSQLGMIMAMLGIGAISYHYQGDDSKIYAAAFTAAIFHLINHATFKGALFMITGAVDHSTGTRDVKKLGGLLTIMPISFTITVITALSMAGVPPFNGFLSKESFLETTFTASQANLFSVDTLGYLFPIIGIVGSVFTFVYSIKFIMHIFFGQYKPEQLPKKAHEVSILMLLSPAILATLVIVLGLFPGILTNSIIEPATSSINHTVIDDVEFHMFHGLTPAFLSTLVIYILGILLIVTFSYWVKLLQRQPGKLTFNYWYNRSANVIPNYSEKMTNSYVTDYSRNNLVIIFGALILLTFVTIFSVPFNINFKDVSPIRIFEVCIVILLLSAAFLILFAKSRLFSIIMLSAVGYAVSVLFIFFKAPDLALTQFVVESISTALFLLCFYHLPNLNRYNEKRSFQLTNALIAGGVGLSVIIIGLIAYGNRHFESISKFYQEHVYDLAHGKNMVNVILVDFRGMDTLFESSVLGIAGLAVYTMIKLRKKRQTQGNEVKNHE</sequence>
<gene>
    <name type="primary">mnhA1</name>
    <name type="ordered locus">SaurJH9_0952</name>
</gene>
<proteinExistence type="inferred from homology"/>
<reference key="1">
    <citation type="submission" date="2007-05" db="EMBL/GenBank/DDBJ databases">
        <title>Complete sequence of chromosome of Staphylococcus aureus subsp. aureus JH9.</title>
        <authorList>
            <consortium name="US DOE Joint Genome Institute"/>
            <person name="Copeland A."/>
            <person name="Lucas S."/>
            <person name="Lapidus A."/>
            <person name="Barry K."/>
            <person name="Detter J.C."/>
            <person name="Glavina del Rio T."/>
            <person name="Hammon N."/>
            <person name="Israni S."/>
            <person name="Pitluck S."/>
            <person name="Chain P."/>
            <person name="Malfatti S."/>
            <person name="Shin M."/>
            <person name="Vergez L."/>
            <person name="Schmutz J."/>
            <person name="Larimer F."/>
            <person name="Land M."/>
            <person name="Hauser L."/>
            <person name="Kyrpides N."/>
            <person name="Kim E."/>
            <person name="Tomasz A."/>
            <person name="Richardson P."/>
        </authorList>
    </citation>
    <scope>NUCLEOTIDE SEQUENCE [LARGE SCALE GENOMIC DNA]</scope>
    <source>
        <strain>JH9</strain>
    </source>
</reference>
<feature type="chain" id="PRO_0000372095" description="Na(+)/H(+) antiporter subunit A1">
    <location>
        <begin position="1"/>
        <end position="801"/>
    </location>
</feature>
<feature type="transmembrane region" description="Helical" evidence="2">
    <location>
        <begin position="1"/>
        <end position="21"/>
    </location>
</feature>
<feature type="transmembrane region" description="Helical" evidence="2">
    <location>
        <begin position="28"/>
        <end position="48"/>
    </location>
</feature>
<feature type="transmembrane region" description="Helical" evidence="2">
    <location>
        <begin position="79"/>
        <end position="99"/>
    </location>
</feature>
<feature type="transmembrane region" description="Helical" evidence="2">
    <location>
        <begin position="117"/>
        <end position="137"/>
    </location>
</feature>
<feature type="transmembrane region" description="Helical" evidence="2">
    <location>
        <begin position="166"/>
        <end position="186"/>
    </location>
</feature>
<feature type="transmembrane region" description="Helical" evidence="2">
    <location>
        <begin position="206"/>
        <end position="226"/>
    </location>
</feature>
<feature type="transmembrane region" description="Helical" evidence="2">
    <location>
        <begin position="265"/>
        <end position="285"/>
    </location>
</feature>
<feature type="transmembrane region" description="Helical" evidence="2">
    <location>
        <begin position="300"/>
        <end position="320"/>
    </location>
</feature>
<feature type="transmembrane region" description="Helical" evidence="2">
    <location>
        <begin position="337"/>
        <end position="357"/>
    </location>
</feature>
<feature type="transmembrane region" description="Helical" evidence="2">
    <location>
        <begin position="373"/>
        <end position="393"/>
    </location>
</feature>
<feature type="transmembrane region" description="Helical" evidence="2">
    <location>
        <begin position="427"/>
        <end position="447"/>
    </location>
</feature>
<feature type="transmembrane region" description="Helical" evidence="2">
    <location>
        <begin position="472"/>
        <end position="492"/>
    </location>
</feature>
<feature type="transmembrane region" description="Helical" evidence="2">
    <location>
        <begin position="522"/>
        <end position="542"/>
    </location>
</feature>
<feature type="transmembrane region" description="Helical" evidence="2">
    <location>
        <begin position="591"/>
        <end position="611"/>
    </location>
</feature>
<feature type="transmembrane region" description="Helical" evidence="2">
    <location>
        <begin position="623"/>
        <end position="643"/>
    </location>
</feature>
<feature type="transmembrane region" description="Helical" evidence="2">
    <location>
        <begin position="646"/>
        <end position="666"/>
    </location>
</feature>
<feature type="transmembrane region" description="Helical" evidence="2">
    <location>
        <begin position="671"/>
        <end position="691"/>
    </location>
</feature>
<feature type="transmembrane region" description="Helical" evidence="2">
    <location>
        <begin position="707"/>
        <end position="727"/>
    </location>
</feature>
<feature type="transmembrane region" description="Helical" evidence="2">
    <location>
        <begin position="764"/>
        <end position="784"/>
    </location>
</feature>
<keyword id="KW-0050">Antiport</keyword>
<keyword id="KW-1003">Cell membrane</keyword>
<keyword id="KW-0375">Hydrogen ion transport</keyword>
<keyword id="KW-0406">Ion transport</keyword>
<keyword id="KW-0472">Membrane</keyword>
<keyword id="KW-0915">Sodium</keyword>
<keyword id="KW-0739">Sodium transport</keyword>
<keyword id="KW-0812">Transmembrane</keyword>
<keyword id="KW-1133">Transmembrane helix</keyword>
<keyword id="KW-0813">Transport</keyword>
<accession>A5IRD0</accession>
<dbReference type="EMBL" id="CP000703">
    <property type="protein sequence ID" value="ABQ48753.1"/>
    <property type="molecule type" value="Genomic_DNA"/>
</dbReference>
<dbReference type="RefSeq" id="WP_000054612.1">
    <property type="nucleotide sequence ID" value="NC_009487.1"/>
</dbReference>
<dbReference type="SMR" id="A5IRD0"/>
<dbReference type="KEGG" id="saj:SaurJH9_0952"/>
<dbReference type="HOGENOM" id="CLU_007100_2_1_9"/>
<dbReference type="GO" id="GO:0005886">
    <property type="term" value="C:plasma membrane"/>
    <property type="evidence" value="ECO:0007669"/>
    <property type="project" value="UniProtKB-SubCell"/>
</dbReference>
<dbReference type="GO" id="GO:0015297">
    <property type="term" value="F:antiporter activity"/>
    <property type="evidence" value="ECO:0007669"/>
    <property type="project" value="UniProtKB-KW"/>
</dbReference>
<dbReference type="GO" id="GO:1902600">
    <property type="term" value="P:proton transmembrane transport"/>
    <property type="evidence" value="ECO:0007669"/>
    <property type="project" value="UniProtKB-KW"/>
</dbReference>
<dbReference type="GO" id="GO:0006814">
    <property type="term" value="P:sodium ion transport"/>
    <property type="evidence" value="ECO:0007669"/>
    <property type="project" value="UniProtKB-KW"/>
</dbReference>
<dbReference type="InterPro" id="IPR050616">
    <property type="entry name" value="CPA3_Na-H_Antiporter_A"/>
</dbReference>
<dbReference type="InterPro" id="IPR005663">
    <property type="entry name" value="MrpA/MnhA1/PhaAB"/>
</dbReference>
<dbReference type="InterPro" id="IPR025383">
    <property type="entry name" value="MrpA_C/MbhD"/>
</dbReference>
<dbReference type="InterPro" id="IPR046806">
    <property type="entry name" value="MrpA_C/MbhE"/>
</dbReference>
<dbReference type="InterPro" id="IPR001750">
    <property type="entry name" value="ND/Mrp_TM"/>
</dbReference>
<dbReference type="InterPro" id="IPR001516">
    <property type="entry name" value="Proton_antipo_N"/>
</dbReference>
<dbReference type="NCBIfam" id="TIGR00940">
    <property type="entry name" value="2a6301s01"/>
    <property type="match status" value="1"/>
</dbReference>
<dbReference type="NCBIfam" id="NF009285">
    <property type="entry name" value="PRK12645.1"/>
    <property type="match status" value="1"/>
</dbReference>
<dbReference type="PANTHER" id="PTHR43373">
    <property type="entry name" value="NA(+)/H(+) ANTIPORTER SUBUNIT"/>
    <property type="match status" value="1"/>
</dbReference>
<dbReference type="PANTHER" id="PTHR43373:SF1">
    <property type="entry name" value="NA(+)_H(+) ANTIPORTER SUBUNIT A"/>
    <property type="match status" value="1"/>
</dbReference>
<dbReference type="Pfam" id="PF13244">
    <property type="entry name" value="MbhD"/>
    <property type="match status" value="1"/>
</dbReference>
<dbReference type="Pfam" id="PF20501">
    <property type="entry name" value="MbhE"/>
    <property type="match status" value="1"/>
</dbReference>
<dbReference type="Pfam" id="PF00361">
    <property type="entry name" value="Proton_antipo_M"/>
    <property type="match status" value="1"/>
</dbReference>
<dbReference type="Pfam" id="PF00662">
    <property type="entry name" value="Proton_antipo_N"/>
    <property type="match status" value="1"/>
</dbReference>
<dbReference type="PRINTS" id="PR01434">
    <property type="entry name" value="NADHDHGNASE5"/>
</dbReference>
<dbReference type="PRINTS" id="PR01435">
    <property type="entry name" value="NPOXDRDTASE5"/>
</dbReference>
<organism>
    <name type="scientific">Staphylococcus aureus (strain JH9)</name>
    <dbReference type="NCBI Taxonomy" id="359786"/>
    <lineage>
        <taxon>Bacteria</taxon>
        <taxon>Bacillati</taxon>
        <taxon>Bacillota</taxon>
        <taxon>Bacilli</taxon>
        <taxon>Bacillales</taxon>
        <taxon>Staphylococcaceae</taxon>
        <taxon>Staphylococcus</taxon>
    </lineage>
</organism>